<accession>Q1Q8K9</accession>
<dbReference type="EC" id="3.1.1.96" evidence="1"/>
<dbReference type="EMBL" id="CP000323">
    <property type="protein sequence ID" value="ABE75994.1"/>
    <property type="molecule type" value="Genomic_DNA"/>
</dbReference>
<dbReference type="RefSeq" id="WP_011514527.1">
    <property type="nucleotide sequence ID" value="NC_007969.1"/>
</dbReference>
<dbReference type="SMR" id="Q1Q8K9"/>
<dbReference type="STRING" id="335284.Pcryo_2217"/>
<dbReference type="KEGG" id="pcr:Pcryo_2217"/>
<dbReference type="eggNOG" id="COG1490">
    <property type="taxonomic scope" value="Bacteria"/>
</dbReference>
<dbReference type="HOGENOM" id="CLU_076901_1_1_6"/>
<dbReference type="Proteomes" id="UP000002425">
    <property type="component" value="Chromosome"/>
</dbReference>
<dbReference type="GO" id="GO:0005737">
    <property type="term" value="C:cytoplasm"/>
    <property type="evidence" value="ECO:0007669"/>
    <property type="project" value="UniProtKB-SubCell"/>
</dbReference>
<dbReference type="GO" id="GO:0051500">
    <property type="term" value="F:D-tyrosyl-tRNA(Tyr) deacylase activity"/>
    <property type="evidence" value="ECO:0007669"/>
    <property type="project" value="TreeGrafter"/>
</dbReference>
<dbReference type="GO" id="GO:0106026">
    <property type="term" value="F:Gly-tRNA(Ala) deacylase activity"/>
    <property type="evidence" value="ECO:0007669"/>
    <property type="project" value="UniProtKB-UniRule"/>
</dbReference>
<dbReference type="GO" id="GO:0043908">
    <property type="term" value="F:Ser(Gly)-tRNA(Ala) hydrolase activity"/>
    <property type="evidence" value="ECO:0007669"/>
    <property type="project" value="UniProtKB-UniRule"/>
</dbReference>
<dbReference type="GO" id="GO:0000049">
    <property type="term" value="F:tRNA binding"/>
    <property type="evidence" value="ECO:0007669"/>
    <property type="project" value="UniProtKB-UniRule"/>
</dbReference>
<dbReference type="GO" id="GO:0019478">
    <property type="term" value="P:D-amino acid catabolic process"/>
    <property type="evidence" value="ECO:0007669"/>
    <property type="project" value="UniProtKB-UniRule"/>
</dbReference>
<dbReference type="FunFam" id="3.50.80.10:FF:000001">
    <property type="entry name" value="D-aminoacyl-tRNA deacylase"/>
    <property type="match status" value="1"/>
</dbReference>
<dbReference type="Gene3D" id="3.50.80.10">
    <property type="entry name" value="D-tyrosyl-tRNA(Tyr) deacylase"/>
    <property type="match status" value="1"/>
</dbReference>
<dbReference type="HAMAP" id="MF_00518">
    <property type="entry name" value="Deacylase_Dtd"/>
    <property type="match status" value="1"/>
</dbReference>
<dbReference type="InterPro" id="IPR003732">
    <property type="entry name" value="Daa-tRNA_deacyls_DTD"/>
</dbReference>
<dbReference type="InterPro" id="IPR023509">
    <property type="entry name" value="DTD-like_sf"/>
</dbReference>
<dbReference type="NCBIfam" id="TIGR00256">
    <property type="entry name" value="D-aminoacyl-tRNA deacylase"/>
    <property type="match status" value="1"/>
</dbReference>
<dbReference type="PANTHER" id="PTHR10472:SF5">
    <property type="entry name" value="D-AMINOACYL-TRNA DEACYLASE 1"/>
    <property type="match status" value="1"/>
</dbReference>
<dbReference type="PANTHER" id="PTHR10472">
    <property type="entry name" value="D-TYROSYL-TRNA TYR DEACYLASE"/>
    <property type="match status" value="1"/>
</dbReference>
<dbReference type="Pfam" id="PF02580">
    <property type="entry name" value="Tyr_Deacylase"/>
    <property type="match status" value="1"/>
</dbReference>
<dbReference type="SUPFAM" id="SSF69500">
    <property type="entry name" value="DTD-like"/>
    <property type="match status" value="1"/>
</dbReference>
<comment type="function">
    <text evidence="1">An aminoacyl-tRNA editing enzyme that deacylates mischarged D-aminoacyl-tRNAs. Also deacylates mischarged glycyl-tRNA(Ala), protecting cells against glycine mischarging by AlaRS. Acts via tRNA-based rather than protein-based catalysis; rejects L-amino acids rather than detecting D-amino acids in the active site. By recycling D-aminoacyl-tRNA to D-amino acids and free tRNA molecules, this enzyme counteracts the toxicity associated with the formation of D-aminoacyl-tRNA entities in vivo and helps enforce protein L-homochirality.</text>
</comment>
<comment type="catalytic activity">
    <reaction evidence="1">
        <text>glycyl-tRNA(Ala) + H2O = tRNA(Ala) + glycine + H(+)</text>
        <dbReference type="Rhea" id="RHEA:53744"/>
        <dbReference type="Rhea" id="RHEA-COMP:9657"/>
        <dbReference type="Rhea" id="RHEA-COMP:13640"/>
        <dbReference type="ChEBI" id="CHEBI:15377"/>
        <dbReference type="ChEBI" id="CHEBI:15378"/>
        <dbReference type="ChEBI" id="CHEBI:57305"/>
        <dbReference type="ChEBI" id="CHEBI:78442"/>
        <dbReference type="ChEBI" id="CHEBI:78522"/>
        <dbReference type="EC" id="3.1.1.96"/>
    </reaction>
</comment>
<comment type="catalytic activity">
    <reaction evidence="1">
        <text>a D-aminoacyl-tRNA + H2O = a tRNA + a D-alpha-amino acid + H(+)</text>
        <dbReference type="Rhea" id="RHEA:13953"/>
        <dbReference type="Rhea" id="RHEA-COMP:10123"/>
        <dbReference type="Rhea" id="RHEA-COMP:10124"/>
        <dbReference type="ChEBI" id="CHEBI:15377"/>
        <dbReference type="ChEBI" id="CHEBI:15378"/>
        <dbReference type="ChEBI" id="CHEBI:59871"/>
        <dbReference type="ChEBI" id="CHEBI:78442"/>
        <dbReference type="ChEBI" id="CHEBI:79333"/>
        <dbReference type="EC" id="3.1.1.96"/>
    </reaction>
</comment>
<comment type="subunit">
    <text evidence="1">Homodimer.</text>
</comment>
<comment type="subcellular location">
    <subcellularLocation>
        <location evidence="1">Cytoplasm</location>
    </subcellularLocation>
</comment>
<comment type="domain">
    <text evidence="1">A Gly-cisPro motif from one monomer fits into the active site of the other monomer to allow specific chiral rejection of L-amino acids.</text>
</comment>
<comment type="similarity">
    <text evidence="1">Belongs to the DTD family.</text>
</comment>
<sequence length="151" mass="16544">MRSLIQRVKYASVSVDGQEVGAIEQGVLAYIGLGHDDNLQSAQRMIDKILTYRIFDNDDDPAKYGKVDKNVQQVGGGLLLVSQFTLMAKTDKGRRPEFGSAMAPDMAQALFAQLVDYAKTQYLTVATGQFGADMQVLSVNDGPLNFLLEVH</sequence>
<protein>
    <recommendedName>
        <fullName evidence="1">D-aminoacyl-tRNA deacylase</fullName>
        <shortName evidence="1">DTD</shortName>
        <ecNumber evidence="1">3.1.1.96</ecNumber>
    </recommendedName>
    <alternativeName>
        <fullName evidence="1">Gly-tRNA(Ala) deacylase</fullName>
    </alternativeName>
</protein>
<reference key="1">
    <citation type="submission" date="2006-03" db="EMBL/GenBank/DDBJ databases">
        <title>Complete sequence of chromosome of Psychrobacter cryohalolentis K5.</title>
        <authorList>
            <consortium name="US DOE Joint Genome Institute"/>
            <person name="Copeland A."/>
            <person name="Lucas S."/>
            <person name="Lapidus A."/>
            <person name="Barry K."/>
            <person name="Detter J.C."/>
            <person name="Glavina T."/>
            <person name="Hammon N."/>
            <person name="Israni S."/>
            <person name="Dalin E."/>
            <person name="Tice H."/>
            <person name="Pitluck S."/>
            <person name="Brettin T."/>
            <person name="Bruce D."/>
            <person name="Han C."/>
            <person name="Tapia R."/>
            <person name="Sims D.R."/>
            <person name="Gilna P."/>
            <person name="Schmutz J."/>
            <person name="Larimer F."/>
            <person name="Land M."/>
            <person name="Hauser L."/>
            <person name="Kyrpides N."/>
            <person name="Kim E."/>
            <person name="Richardson P."/>
        </authorList>
    </citation>
    <scope>NUCLEOTIDE SEQUENCE [LARGE SCALE GENOMIC DNA]</scope>
    <source>
        <strain>ATCC BAA-1226 / DSM 17306 / VKM B-2378 / K5</strain>
    </source>
</reference>
<feature type="chain" id="PRO_1000127563" description="D-aminoacyl-tRNA deacylase">
    <location>
        <begin position="1"/>
        <end position="151"/>
    </location>
</feature>
<feature type="short sequence motif" description="Gly-cisPro motif, important for rejection of L-amino acids" evidence="1">
    <location>
        <begin position="142"/>
        <end position="143"/>
    </location>
</feature>
<evidence type="ECO:0000255" key="1">
    <source>
        <dbReference type="HAMAP-Rule" id="MF_00518"/>
    </source>
</evidence>
<gene>
    <name evidence="1" type="primary">dtd</name>
    <name type="ordered locus">Pcryo_2217</name>
</gene>
<name>DTD_PSYCK</name>
<proteinExistence type="inferred from homology"/>
<keyword id="KW-0963">Cytoplasm</keyword>
<keyword id="KW-0378">Hydrolase</keyword>
<keyword id="KW-0694">RNA-binding</keyword>
<keyword id="KW-0820">tRNA-binding</keyword>
<organism>
    <name type="scientific">Psychrobacter cryohalolentis (strain ATCC BAA-1226 / DSM 17306 / VKM B-2378 / K5)</name>
    <dbReference type="NCBI Taxonomy" id="335284"/>
    <lineage>
        <taxon>Bacteria</taxon>
        <taxon>Pseudomonadati</taxon>
        <taxon>Pseudomonadota</taxon>
        <taxon>Gammaproteobacteria</taxon>
        <taxon>Moraxellales</taxon>
        <taxon>Moraxellaceae</taxon>
        <taxon>Psychrobacter</taxon>
    </lineage>
</organism>